<comment type="function">
    <text>Might contribute to transformation as a member of a membrane-bound pore complex at the base of the transformasome. It could directly interact with transforming DNA during translocation indirectly by participating in the assembly of the pore.</text>
</comment>
<comment type="subcellular location">
    <subcellularLocation>
        <location evidence="2">Cell inner membrane</location>
        <topology evidence="2">Multi-pass membrane protein</topology>
    </subcellularLocation>
</comment>
<keyword id="KW-0997">Cell inner membrane</keyword>
<keyword id="KW-1003">Cell membrane</keyword>
<keyword id="KW-0178">Competence</keyword>
<keyword id="KW-0472">Membrane</keyword>
<keyword id="KW-1185">Reference proteome</keyword>
<keyword id="KW-0812">Transmembrane</keyword>
<keyword id="KW-1133">Transmembrane helix</keyword>
<keyword id="KW-0813">Transport</keyword>
<sequence>MKLNLITLVVLLIVADLTLLFLPQPLLLPWQVALVIALVLIFLFIFLRRNFLVSLAFFVASLGYFHYSALSLSQQAQNITAQKQVVTFKIQEILHQQDYQTLIATATLENNLQEQRIFLNWKAKEVPQLSEIWQAEISLRSLSARLNFGGFDRQQWYFSKGITAVGTVKSAVKIADVSSLRAEKLQQVKKQTEGLSLQGLLIALAFGERAWLDKTTWSIYQQTNTAHLIAISGLHIGLAMGIGFCLARVVQVFFPTRFIHPYFPLVFGVLFALIYAYLAGFSVPTFRAISALVFVLFIQIMRRHYSPIQFFTLVVGFLLFCDPLMPLSVSFWLSCGAVGCLLLWYRYVPFSLFQWKNRPFSPKVRWIFSLFHLQFGLLLFFTPLQLFLFNGLSLSGFLANFMAVPIYSFLLVPLILFAVFTNGTMFSWQLANKLAEGITGLISVFQGNWLTVSFNLALGLTALCAGIFMLIIWNIYREPEISSSNWQIKRAKFFTLNLSKPLLKNERINVLRCSFGIILLCFTILLFKQLSKPTWQVDTLDVGQGLATLIVKNGKGILYDTGSSWRGGSMAELEILPYLQREGIVLEKLILSHDDNDHAGGASTILKAYPNVELITPSRKNYGENYRTFCTAGRDWHWQGLHFQILSPHNVVTRADNSHSCVILVDDGKNSVLLTGDAEAKNEQIFARTLGKIDVLQVGHHGSKTSTSEYLLSQVRPDVAIISSGRWNPWKFPHYSVMERLHRYKSAVENTAVSGQVRVNFFQDRLEIQQARTKFSPWYARVIGLSKE</sequence>
<gene>
    <name type="primary">rec2</name>
    <name type="synonym">rec-2</name>
    <name type="ordered locus">HI_0061</name>
</gene>
<proteinExistence type="predicted"/>
<name>REC2_HAEIN</name>
<feature type="chain" id="PRO_0000097224" description="Recombination protein 2">
    <location>
        <begin position="1"/>
        <end position="788"/>
    </location>
</feature>
<feature type="transmembrane region" description="Helical" evidence="1">
    <location>
        <begin position="3"/>
        <end position="23"/>
    </location>
</feature>
<feature type="transmembrane region" description="Helical" evidence="1">
    <location>
        <begin position="27"/>
        <end position="47"/>
    </location>
</feature>
<feature type="transmembrane region" description="Helical" evidence="1">
    <location>
        <begin position="51"/>
        <end position="71"/>
    </location>
</feature>
<feature type="transmembrane region" description="Helical" evidence="1">
    <location>
        <begin position="226"/>
        <end position="246"/>
    </location>
</feature>
<feature type="transmembrane region" description="Helical" evidence="1">
    <location>
        <begin position="263"/>
        <end position="283"/>
    </location>
</feature>
<feature type="transmembrane region" description="Helical" evidence="1">
    <location>
        <begin position="313"/>
        <end position="333"/>
    </location>
</feature>
<feature type="transmembrane region" description="Helical" evidence="1">
    <location>
        <begin position="367"/>
        <end position="387"/>
    </location>
</feature>
<feature type="transmembrane region" description="Helical" evidence="1">
    <location>
        <begin position="401"/>
        <end position="421"/>
    </location>
</feature>
<feature type="transmembrane region" description="Helical" evidence="1">
    <location>
        <begin position="434"/>
        <end position="454"/>
    </location>
</feature>
<feature type="transmembrane region" description="Helical" evidence="1">
    <location>
        <begin position="456"/>
        <end position="476"/>
    </location>
</feature>
<feature type="transmembrane region" description="Helical" evidence="1">
    <location>
        <begin position="508"/>
        <end position="528"/>
    </location>
</feature>
<feature type="sequence conflict" description="In Ref. 1; AAC13733." evidence="2" ref="1">
    <original>VENTAVSGQVRVNFFQDRLEIQQARTKFSPWYARVIGLSKE</original>
    <variation>GRKYRCFGASAGKFFSRPIRNPASSHKIFPLVCACNWIIKGIKGTMRAIFTIR</variation>
    <location>
        <begin position="748"/>
        <end position="788"/>
    </location>
</feature>
<dbReference type="EMBL" id="L20805">
    <property type="protein sequence ID" value="AAC13733.1"/>
    <property type="molecule type" value="Genomic_DNA"/>
</dbReference>
<dbReference type="EMBL" id="L42023">
    <property type="protein sequence ID" value="AAC21739.1"/>
    <property type="molecule type" value="Genomic_DNA"/>
</dbReference>
<dbReference type="PIR" id="I64045">
    <property type="entry name" value="I64045"/>
</dbReference>
<dbReference type="RefSeq" id="NP_438234.1">
    <property type="nucleotide sequence ID" value="NC_000907.1"/>
</dbReference>
<dbReference type="SMR" id="P44408"/>
<dbReference type="STRING" id="71421.HI_0061"/>
<dbReference type="TCDB" id="3.A.11.2.2">
    <property type="family name" value="the bacterial competence-related dna transformation transporter (dna-t) family"/>
</dbReference>
<dbReference type="EnsemblBacteria" id="AAC21739">
    <property type="protein sequence ID" value="AAC21739"/>
    <property type="gene ID" value="HI_0061"/>
</dbReference>
<dbReference type="KEGG" id="hin:HI_0061"/>
<dbReference type="PATRIC" id="fig|71421.8.peg.61"/>
<dbReference type="eggNOG" id="COG0658">
    <property type="taxonomic scope" value="Bacteria"/>
</dbReference>
<dbReference type="eggNOG" id="COG2333">
    <property type="taxonomic scope" value="Bacteria"/>
</dbReference>
<dbReference type="HOGENOM" id="CLU_010363_3_0_6"/>
<dbReference type="OrthoDB" id="9761531at2"/>
<dbReference type="PhylomeDB" id="P44408"/>
<dbReference type="BioCyc" id="HINF71421:G1GJ1-62-MONOMER"/>
<dbReference type="Proteomes" id="UP000000579">
    <property type="component" value="Chromosome"/>
</dbReference>
<dbReference type="GO" id="GO:0005886">
    <property type="term" value="C:plasma membrane"/>
    <property type="evidence" value="ECO:0000318"/>
    <property type="project" value="GO_Central"/>
</dbReference>
<dbReference type="GO" id="GO:0030420">
    <property type="term" value="P:establishment of competence for transformation"/>
    <property type="evidence" value="ECO:0007669"/>
    <property type="project" value="UniProtKB-KW"/>
</dbReference>
<dbReference type="CDD" id="cd07731">
    <property type="entry name" value="ComA-like_MBL-fold"/>
    <property type="match status" value="1"/>
</dbReference>
<dbReference type="Gene3D" id="3.60.15.10">
    <property type="entry name" value="Ribonuclease Z/Hydroxyacylglutathione hydrolase-like"/>
    <property type="match status" value="1"/>
</dbReference>
<dbReference type="InterPro" id="IPR035681">
    <property type="entry name" value="ComA-like_MBL"/>
</dbReference>
<dbReference type="InterPro" id="IPR004477">
    <property type="entry name" value="ComEC_N"/>
</dbReference>
<dbReference type="InterPro" id="IPR004797">
    <property type="entry name" value="Competence_ComEC/Rec2"/>
</dbReference>
<dbReference type="InterPro" id="IPR052159">
    <property type="entry name" value="Competence_DNA_uptake"/>
</dbReference>
<dbReference type="InterPro" id="IPR025405">
    <property type="entry name" value="DUF4131"/>
</dbReference>
<dbReference type="InterPro" id="IPR001279">
    <property type="entry name" value="Metallo-B-lactamas"/>
</dbReference>
<dbReference type="InterPro" id="IPR036866">
    <property type="entry name" value="RibonucZ/Hydroxyglut_hydro"/>
</dbReference>
<dbReference type="NCBIfam" id="TIGR00360">
    <property type="entry name" value="ComEC_N-term"/>
    <property type="match status" value="1"/>
</dbReference>
<dbReference type="NCBIfam" id="TIGR00361">
    <property type="entry name" value="ComEC_Rec2"/>
    <property type="match status" value="1"/>
</dbReference>
<dbReference type="PANTHER" id="PTHR30619">
    <property type="entry name" value="DNA INTERNALIZATION/COMPETENCE PROTEIN COMEC/REC2"/>
    <property type="match status" value="1"/>
</dbReference>
<dbReference type="PANTHER" id="PTHR30619:SF1">
    <property type="entry name" value="RECOMBINATION PROTEIN 2"/>
    <property type="match status" value="1"/>
</dbReference>
<dbReference type="Pfam" id="PF03772">
    <property type="entry name" value="Competence"/>
    <property type="match status" value="1"/>
</dbReference>
<dbReference type="Pfam" id="PF13567">
    <property type="entry name" value="DUF4131"/>
    <property type="match status" value="1"/>
</dbReference>
<dbReference type="Pfam" id="PF00753">
    <property type="entry name" value="Lactamase_B"/>
    <property type="match status" value="1"/>
</dbReference>
<dbReference type="SMART" id="SM00849">
    <property type="entry name" value="Lactamase_B"/>
    <property type="match status" value="1"/>
</dbReference>
<dbReference type="SUPFAM" id="SSF56281">
    <property type="entry name" value="Metallo-hydrolase/oxidoreductase"/>
    <property type="match status" value="1"/>
</dbReference>
<accession>P44408</accession>
<organism>
    <name type="scientific">Haemophilus influenzae (strain ATCC 51907 / DSM 11121 / KW20 / Rd)</name>
    <dbReference type="NCBI Taxonomy" id="71421"/>
    <lineage>
        <taxon>Bacteria</taxon>
        <taxon>Pseudomonadati</taxon>
        <taxon>Pseudomonadota</taxon>
        <taxon>Gammaproteobacteria</taxon>
        <taxon>Pasteurellales</taxon>
        <taxon>Pasteurellaceae</taxon>
        <taxon>Haemophilus</taxon>
    </lineage>
</organism>
<protein>
    <recommendedName>
        <fullName>Recombination protein 2</fullName>
    </recommendedName>
</protein>
<evidence type="ECO:0000255" key="1"/>
<evidence type="ECO:0000305" key="2"/>
<reference key="1">
    <citation type="journal article" date="1994" name="Gene">
        <title>Sequence of the rec-2 locus of Haemophilus influenzae: homologies to comE-ORF3 of Bacillus subtilis and msbA of Escherichia coli.</title>
        <authorList>
            <person name="Clifton S.W."/>
            <person name="McCarthy D."/>
            <person name="Roe B.A."/>
        </authorList>
    </citation>
    <scope>NUCLEOTIDE SEQUENCE [GENOMIC DNA]</scope>
    <source>
        <strain>BC200</strain>
    </source>
</reference>
<reference key="2">
    <citation type="journal article" date="1995" name="Science">
        <title>Whole-genome random sequencing and assembly of Haemophilus influenzae Rd.</title>
        <authorList>
            <person name="Fleischmann R.D."/>
            <person name="Adams M.D."/>
            <person name="White O."/>
            <person name="Clayton R.A."/>
            <person name="Kirkness E.F."/>
            <person name="Kerlavage A.R."/>
            <person name="Bult C.J."/>
            <person name="Tomb J.-F."/>
            <person name="Dougherty B.A."/>
            <person name="Merrick J.M."/>
            <person name="McKenney K."/>
            <person name="Sutton G.G."/>
            <person name="FitzHugh W."/>
            <person name="Fields C.A."/>
            <person name="Gocayne J.D."/>
            <person name="Scott J.D."/>
            <person name="Shirley R."/>
            <person name="Liu L.-I."/>
            <person name="Glodek A."/>
            <person name="Kelley J.M."/>
            <person name="Weidman J.F."/>
            <person name="Phillips C.A."/>
            <person name="Spriggs T."/>
            <person name="Hedblom E."/>
            <person name="Cotton M.D."/>
            <person name="Utterback T.R."/>
            <person name="Hanna M.C."/>
            <person name="Nguyen D.T."/>
            <person name="Saudek D.M."/>
            <person name="Brandon R.C."/>
            <person name="Fine L.D."/>
            <person name="Fritchman J.L."/>
            <person name="Fuhrmann J.L."/>
            <person name="Geoghagen N.S.M."/>
            <person name="Gnehm C.L."/>
            <person name="McDonald L.A."/>
            <person name="Small K.V."/>
            <person name="Fraser C.M."/>
            <person name="Smith H.O."/>
            <person name="Venter J.C."/>
        </authorList>
    </citation>
    <scope>NUCLEOTIDE SEQUENCE [LARGE SCALE GENOMIC DNA]</scope>
    <source>
        <strain>ATCC 51907 / DSM 11121 / KW20 / Rd</strain>
    </source>
</reference>